<evidence type="ECO:0000255" key="1">
    <source>
        <dbReference type="HAMAP-Rule" id="MF_00365"/>
    </source>
</evidence>
<gene>
    <name evidence="1" type="primary">recF</name>
    <name type="ordered locus">Sbal223_0003</name>
</gene>
<feature type="chain" id="PRO_1000133698" description="DNA replication and repair protein RecF">
    <location>
        <begin position="1"/>
        <end position="360"/>
    </location>
</feature>
<feature type="binding site" evidence="1">
    <location>
        <begin position="30"/>
        <end position="37"/>
    </location>
    <ligand>
        <name>ATP</name>
        <dbReference type="ChEBI" id="CHEBI:30616"/>
    </ligand>
</feature>
<reference key="1">
    <citation type="submission" date="2008-12" db="EMBL/GenBank/DDBJ databases">
        <title>Complete sequence of chromosome of Shewanella baltica OS223.</title>
        <authorList>
            <consortium name="US DOE Joint Genome Institute"/>
            <person name="Lucas S."/>
            <person name="Copeland A."/>
            <person name="Lapidus A."/>
            <person name="Glavina del Rio T."/>
            <person name="Dalin E."/>
            <person name="Tice H."/>
            <person name="Bruce D."/>
            <person name="Goodwin L."/>
            <person name="Pitluck S."/>
            <person name="Chertkov O."/>
            <person name="Meincke L."/>
            <person name="Brettin T."/>
            <person name="Detter J.C."/>
            <person name="Han C."/>
            <person name="Kuske C.R."/>
            <person name="Larimer F."/>
            <person name="Land M."/>
            <person name="Hauser L."/>
            <person name="Kyrpides N."/>
            <person name="Ovchinnikova G."/>
            <person name="Brettar I."/>
            <person name="Rodrigues J."/>
            <person name="Konstantinidis K."/>
            <person name="Tiedje J."/>
        </authorList>
    </citation>
    <scope>NUCLEOTIDE SEQUENCE [LARGE SCALE GENOMIC DNA]</scope>
    <source>
        <strain>OS223</strain>
    </source>
</reference>
<sequence length="360" mass="40641">MSLTRLNIEAFRNIQSAQLIPAPGINLIYGQNGSGKTSILEAIYFLGMGRSFRSHLSQRVINNDDDKLTLFATLNLARGDSKIGLRRFRSGETEVRIDGEKVKRLSTLAETLPIQVITPESFSLLFEGPKSRRQFIDWGAFHADPQFYGAWTNVRRVLKQRNQLLRNGSSYSNIQFWDQEFVRYAEQVTEIRNHYVDSLNELLKGIIGEFLPSVDVKVSFTRGWDSKTDFAELLENQYSRDLATGHTVSGPHKADLRLRVGTLPAQDALSRGQLKLLVCALRIAQGKLLKQQIDKHSIYLVDDLPSELDAQHRQLLLKQLTDTGAQVFVTAIDPAAIVDSLHTPPSRMFHVEQGRVTVIE</sequence>
<accession>B8E3P6</accession>
<protein>
    <recommendedName>
        <fullName evidence="1">DNA replication and repair protein RecF</fullName>
    </recommendedName>
</protein>
<keyword id="KW-0067">ATP-binding</keyword>
<keyword id="KW-0963">Cytoplasm</keyword>
<keyword id="KW-0227">DNA damage</keyword>
<keyword id="KW-0234">DNA repair</keyword>
<keyword id="KW-0235">DNA replication</keyword>
<keyword id="KW-0238">DNA-binding</keyword>
<keyword id="KW-0547">Nucleotide-binding</keyword>
<keyword id="KW-0742">SOS response</keyword>
<dbReference type="EMBL" id="CP001252">
    <property type="protein sequence ID" value="ACK44547.1"/>
    <property type="molecule type" value="Genomic_DNA"/>
</dbReference>
<dbReference type="RefSeq" id="WP_006083824.1">
    <property type="nucleotide sequence ID" value="NC_011663.1"/>
</dbReference>
<dbReference type="SMR" id="B8E3P6"/>
<dbReference type="KEGG" id="sbp:Sbal223_0003"/>
<dbReference type="HOGENOM" id="CLU_040267_0_0_6"/>
<dbReference type="Proteomes" id="UP000002507">
    <property type="component" value="Chromosome"/>
</dbReference>
<dbReference type="GO" id="GO:0005737">
    <property type="term" value="C:cytoplasm"/>
    <property type="evidence" value="ECO:0007669"/>
    <property type="project" value="UniProtKB-SubCell"/>
</dbReference>
<dbReference type="GO" id="GO:0005524">
    <property type="term" value="F:ATP binding"/>
    <property type="evidence" value="ECO:0007669"/>
    <property type="project" value="UniProtKB-UniRule"/>
</dbReference>
<dbReference type="GO" id="GO:0003697">
    <property type="term" value="F:single-stranded DNA binding"/>
    <property type="evidence" value="ECO:0007669"/>
    <property type="project" value="UniProtKB-UniRule"/>
</dbReference>
<dbReference type="GO" id="GO:0006260">
    <property type="term" value="P:DNA replication"/>
    <property type="evidence" value="ECO:0007669"/>
    <property type="project" value="UniProtKB-UniRule"/>
</dbReference>
<dbReference type="GO" id="GO:0000731">
    <property type="term" value="P:DNA synthesis involved in DNA repair"/>
    <property type="evidence" value="ECO:0007669"/>
    <property type="project" value="TreeGrafter"/>
</dbReference>
<dbReference type="GO" id="GO:0006302">
    <property type="term" value="P:double-strand break repair"/>
    <property type="evidence" value="ECO:0007669"/>
    <property type="project" value="TreeGrafter"/>
</dbReference>
<dbReference type="GO" id="GO:0009432">
    <property type="term" value="P:SOS response"/>
    <property type="evidence" value="ECO:0007669"/>
    <property type="project" value="UniProtKB-UniRule"/>
</dbReference>
<dbReference type="FunFam" id="1.20.1050.90:FF:000001">
    <property type="entry name" value="DNA replication and repair protein RecF"/>
    <property type="match status" value="1"/>
</dbReference>
<dbReference type="Gene3D" id="3.40.50.300">
    <property type="entry name" value="P-loop containing nucleotide triphosphate hydrolases"/>
    <property type="match status" value="1"/>
</dbReference>
<dbReference type="Gene3D" id="1.20.1050.90">
    <property type="entry name" value="RecF/RecN/SMC, N-terminal domain"/>
    <property type="match status" value="1"/>
</dbReference>
<dbReference type="HAMAP" id="MF_00365">
    <property type="entry name" value="RecF"/>
    <property type="match status" value="1"/>
</dbReference>
<dbReference type="InterPro" id="IPR001238">
    <property type="entry name" value="DNA-binding_RecF"/>
</dbReference>
<dbReference type="InterPro" id="IPR018078">
    <property type="entry name" value="DNA-binding_RecF_CS"/>
</dbReference>
<dbReference type="InterPro" id="IPR027417">
    <property type="entry name" value="P-loop_NTPase"/>
</dbReference>
<dbReference type="InterPro" id="IPR003395">
    <property type="entry name" value="RecF/RecN/SMC_N"/>
</dbReference>
<dbReference type="InterPro" id="IPR042174">
    <property type="entry name" value="RecF_2"/>
</dbReference>
<dbReference type="NCBIfam" id="TIGR00611">
    <property type="entry name" value="recf"/>
    <property type="match status" value="1"/>
</dbReference>
<dbReference type="PANTHER" id="PTHR32182">
    <property type="entry name" value="DNA REPLICATION AND REPAIR PROTEIN RECF"/>
    <property type="match status" value="1"/>
</dbReference>
<dbReference type="PANTHER" id="PTHR32182:SF0">
    <property type="entry name" value="DNA REPLICATION AND REPAIR PROTEIN RECF"/>
    <property type="match status" value="1"/>
</dbReference>
<dbReference type="Pfam" id="PF02463">
    <property type="entry name" value="SMC_N"/>
    <property type="match status" value="1"/>
</dbReference>
<dbReference type="SUPFAM" id="SSF52540">
    <property type="entry name" value="P-loop containing nucleoside triphosphate hydrolases"/>
    <property type="match status" value="1"/>
</dbReference>
<dbReference type="PROSITE" id="PS00617">
    <property type="entry name" value="RECF_1"/>
    <property type="match status" value="1"/>
</dbReference>
<dbReference type="PROSITE" id="PS00618">
    <property type="entry name" value="RECF_2"/>
    <property type="match status" value="1"/>
</dbReference>
<comment type="function">
    <text evidence="1">The RecF protein is involved in DNA metabolism; it is required for DNA replication and normal SOS inducibility. RecF binds preferentially to single-stranded, linear DNA. It also seems to bind ATP.</text>
</comment>
<comment type="subcellular location">
    <subcellularLocation>
        <location evidence="1">Cytoplasm</location>
    </subcellularLocation>
</comment>
<comment type="similarity">
    <text evidence="1">Belongs to the RecF family.</text>
</comment>
<name>RECF_SHEB2</name>
<proteinExistence type="inferred from homology"/>
<organism>
    <name type="scientific">Shewanella baltica (strain OS223)</name>
    <dbReference type="NCBI Taxonomy" id="407976"/>
    <lineage>
        <taxon>Bacteria</taxon>
        <taxon>Pseudomonadati</taxon>
        <taxon>Pseudomonadota</taxon>
        <taxon>Gammaproteobacteria</taxon>
        <taxon>Alteromonadales</taxon>
        <taxon>Shewanellaceae</taxon>
        <taxon>Shewanella</taxon>
    </lineage>
</organism>